<reference key="1">
    <citation type="journal article" date="2009" name="PLoS Biol.">
        <title>Lineage-specific biology revealed by a finished genome assembly of the mouse.</title>
        <authorList>
            <person name="Church D.M."/>
            <person name="Goodstadt L."/>
            <person name="Hillier L.W."/>
            <person name="Zody M.C."/>
            <person name="Goldstein S."/>
            <person name="She X."/>
            <person name="Bult C.J."/>
            <person name="Agarwala R."/>
            <person name="Cherry J.L."/>
            <person name="DiCuccio M."/>
            <person name="Hlavina W."/>
            <person name="Kapustin Y."/>
            <person name="Meric P."/>
            <person name="Maglott D."/>
            <person name="Birtle Z."/>
            <person name="Marques A.C."/>
            <person name="Graves T."/>
            <person name="Zhou S."/>
            <person name="Teague B."/>
            <person name="Potamousis K."/>
            <person name="Churas C."/>
            <person name="Place M."/>
            <person name="Herschleb J."/>
            <person name="Runnheim R."/>
            <person name="Forrest D."/>
            <person name="Amos-Landgraf J."/>
            <person name="Schwartz D.C."/>
            <person name="Cheng Z."/>
            <person name="Lindblad-Toh K."/>
            <person name="Eichler E.E."/>
            <person name="Ponting C.P."/>
        </authorList>
    </citation>
    <scope>NUCLEOTIDE SEQUENCE [LARGE SCALE GENOMIC DNA]</scope>
    <source>
        <strain>C57BL/6J</strain>
    </source>
</reference>
<reference key="2">
    <citation type="journal article" date="2004" name="Genome Res.">
        <title>The status, quality, and expansion of the NIH full-length cDNA project: the Mammalian Gene Collection (MGC).</title>
        <authorList>
            <consortium name="The MGC Project Team"/>
        </authorList>
    </citation>
    <scope>NUCLEOTIDE SEQUENCE [LARGE SCALE MRNA]</scope>
</reference>
<reference key="3">
    <citation type="journal article" date="2004" name="Eur. J. Cell Biol.">
        <title>Comprehensive analysis of keratin gene clusters in humans and rodents.</title>
        <authorList>
            <person name="Hesse M."/>
            <person name="Zimek A."/>
            <person name="Weber K."/>
            <person name="Magin T.M."/>
        </authorList>
    </citation>
    <scope>IDENTIFICATION</scope>
</reference>
<accession>Q6IFX3</accession>
<accession>A0AUL0</accession>
<accession>Q3B7Y6</accession>
<gene>
    <name type="primary">Krt40</name>
    <name type="synonym">Ka36</name>
</gene>
<name>K1C40_MOUSE</name>
<keyword id="KW-0175">Coiled coil</keyword>
<keyword id="KW-0403">Intermediate filament</keyword>
<keyword id="KW-0416">Keratin</keyword>
<keyword id="KW-1185">Reference proteome</keyword>
<proteinExistence type="evidence at transcript level"/>
<sequence length="439" mass="48928">MASDGSPSCCSSEPCAGASGCATASFCPTNTTCLPNTCSTSRCQTPSFLCRASLPACCLSPCYLAGGCNSPCLVGSCAWCEEGSFNSNEKETMQFLNDRLASYLERVRSLEENNAELECRIREQCEPNAPLVCPDYQRYFDTIEELQQKILCTKAENSRLAVQVDNCKLAADDFRSKYESELSLRQLVENDITGLRGILGELTLCKSDLEAHVESMKDDLICLKKGHEEEVNLLREQLGDRLSVELDTAPTVDLNKVLDEMRCQYERVLANNRRDAEEWFAAQTEELNQQQKSSAEQLEGCQTEMLELKRKANTLEIELQAQQTLTESLECTVAETEAQYSTQLAQMQCLIDSVEHQLAEIRCDLERQNQEYQVLLDTKARLECEINTYRGLLEKEDSRLPCNPGSGAPMPNSTCEPCSNSMCEPCSAYVICTVENCCA</sequence>
<evidence type="ECO:0000250" key="1"/>
<evidence type="ECO:0000255" key="2">
    <source>
        <dbReference type="PROSITE-ProRule" id="PRU01188"/>
    </source>
</evidence>
<evidence type="ECO:0000305" key="3"/>
<organism>
    <name type="scientific">Mus musculus</name>
    <name type="common">Mouse</name>
    <dbReference type="NCBI Taxonomy" id="10090"/>
    <lineage>
        <taxon>Eukaryota</taxon>
        <taxon>Metazoa</taxon>
        <taxon>Chordata</taxon>
        <taxon>Craniata</taxon>
        <taxon>Vertebrata</taxon>
        <taxon>Euteleostomi</taxon>
        <taxon>Mammalia</taxon>
        <taxon>Eutheria</taxon>
        <taxon>Euarchontoglires</taxon>
        <taxon>Glires</taxon>
        <taxon>Rodentia</taxon>
        <taxon>Myomorpha</taxon>
        <taxon>Muroidea</taxon>
        <taxon>Muridae</taxon>
        <taxon>Murinae</taxon>
        <taxon>Mus</taxon>
        <taxon>Mus</taxon>
    </lineage>
</organism>
<dbReference type="EMBL" id="AL591417">
    <property type="status" value="NOT_ANNOTATED_CDS"/>
    <property type="molecule type" value="Genomic_DNA"/>
</dbReference>
<dbReference type="EMBL" id="BC107359">
    <property type="protein sequence ID" value="AAI07360.1"/>
    <property type="molecule type" value="mRNA"/>
</dbReference>
<dbReference type="EMBL" id="BC107360">
    <property type="protein sequence ID" value="AAI07361.1"/>
    <property type="molecule type" value="mRNA"/>
</dbReference>
<dbReference type="EMBL" id="BC119522">
    <property type="protein sequence ID" value="AAI19523.1"/>
    <property type="molecule type" value="mRNA"/>
</dbReference>
<dbReference type="EMBL" id="BK004023">
    <property type="protein sequence ID" value="DAA04490.1"/>
    <property type="molecule type" value="mRNA"/>
</dbReference>
<dbReference type="CCDS" id="CCDS36307.1"/>
<dbReference type="RefSeq" id="NP_001034755.1">
    <property type="nucleotide sequence ID" value="NM_001039666.3"/>
</dbReference>
<dbReference type="SMR" id="Q6IFX3"/>
<dbReference type="BioGRID" id="240431">
    <property type="interactions" value="7"/>
</dbReference>
<dbReference type="FunCoup" id="Q6IFX3">
    <property type="interactions" value="268"/>
</dbReference>
<dbReference type="IntAct" id="Q6IFX3">
    <property type="interactions" value="1"/>
</dbReference>
<dbReference type="STRING" id="10090.ENSMUSP00000073869"/>
<dbReference type="PhosphoSitePlus" id="Q6IFX3"/>
<dbReference type="jPOST" id="Q6IFX3"/>
<dbReference type="PaxDb" id="10090-ENSMUSP00000073869"/>
<dbReference type="PeptideAtlas" id="Q6IFX3"/>
<dbReference type="ProteomicsDB" id="268938"/>
<dbReference type="Antibodypedia" id="28766">
    <property type="antibodies" value="67 antibodies from 18 providers"/>
</dbReference>
<dbReference type="DNASU" id="406221"/>
<dbReference type="Ensembl" id="ENSMUST00000074253.4">
    <property type="protein sequence ID" value="ENSMUSP00000073869.4"/>
    <property type="gene ID" value="ENSMUSG00000059169.10"/>
</dbReference>
<dbReference type="GeneID" id="406221"/>
<dbReference type="KEGG" id="mmu:406221"/>
<dbReference type="UCSC" id="uc007liy.1">
    <property type="organism name" value="mouse"/>
</dbReference>
<dbReference type="AGR" id="MGI:3629968"/>
<dbReference type="CTD" id="125115"/>
<dbReference type="MGI" id="MGI:3629968">
    <property type="gene designation" value="Krt40"/>
</dbReference>
<dbReference type="VEuPathDB" id="HostDB:ENSMUSG00000059169"/>
<dbReference type="eggNOG" id="ENOG502SHG0">
    <property type="taxonomic scope" value="Eukaryota"/>
</dbReference>
<dbReference type="GeneTree" id="ENSGT00940000161968"/>
<dbReference type="HOGENOM" id="CLU_012560_8_0_1"/>
<dbReference type="InParanoid" id="Q6IFX3"/>
<dbReference type="OMA" id="PCSPESC"/>
<dbReference type="OrthoDB" id="2441647at2759"/>
<dbReference type="PhylomeDB" id="Q6IFX3"/>
<dbReference type="TreeFam" id="TF332742"/>
<dbReference type="Reactome" id="R-MMU-6805567">
    <property type="pathway name" value="Keratinization"/>
</dbReference>
<dbReference type="Reactome" id="R-MMU-6809371">
    <property type="pathway name" value="Formation of the cornified envelope"/>
</dbReference>
<dbReference type="BioGRID-ORCS" id="406221">
    <property type="hits" value="2 hits in 76 CRISPR screens"/>
</dbReference>
<dbReference type="PRO" id="PR:Q6IFX3"/>
<dbReference type="Proteomes" id="UP000000589">
    <property type="component" value="Chromosome 11"/>
</dbReference>
<dbReference type="RNAct" id="Q6IFX3">
    <property type="molecule type" value="protein"/>
</dbReference>
<dbReference type="Bgee" id="ENSMUSG00000059169">
    <property type="expression patterns" value="Expressed in lip and 3 other cell types or tissues"/>
</dbReference>
<dbReference type="ExpressionAtlas" id="Q6IFX3">
    <property type="expression patterns" value="baseline and differential"/>
</dbReference>
<dbReference type="GO" id="GO:0005882">
    <property type="term" value="C:intermediate filament"/>
    <property type="evidence" value="ECO:0007669"/>
    <property type="project" value="UniProtKB-KW"/>
</dbReference>
<dbReference type="GO" id="GO:0005198">
    <property type="term" value="F:structural molecule activity"/>
    <property type="evidence" value="ECO:0007669"/>
    <property type="project" value="InterPro"/>
</dbReference>
<dbReference type="FunFam" id="1.20.5.1160:FF:000002">
    <property type="entry name" value="Type I keratin 10"/>
    <property type="match status" value="1"/>
</dbReference>
<dbReference type="FunFam" id="1.20.5.170:FF:000002">
    <property type="entry name" value="Type I keratin KA11"/>
    <property type="match status" value="1"/>
</dbReference>
<dbReference type="FunFam" id="1.20.5.500:FF:000001">
    <property type="entry name" value="Type II keratin 23"/>
    <property type="match status" value="1"/>
</dbReference>
<dbReference type="Gene3D" id="1.20.5.170">
    <property type="match status" value="1"/>
</dbReference>
<dbReference type="Gene3D" id="1.20.5.500">
    <property type="entry name" value="Single helix bin"/>
    <property type="match status" value="1"/>
</dbReference>
<dbReference type="Gene3D" id="1.20.5.1160">
    <property type="entry name" value="Vasodilator-stimulated phosphoprotein"/>
    <property type="match status" value="1"/>
</dbReference>
<dbReference type="InterPro" id="IPR018039">
    <property type="entry name" value="IF_conserved"/>
</dbReference>
<dbReference type="InterPro" id="IPR039008">
    <property type="entry name" value="IF_rod_dom"/>
</dbReference>
<dbReference type="InterPro" id="IPR002957">
    <property type="entry name" value="Keratin_I"/>
</dbReference>
<dbReference type="PANTHER" id="PTHR23239">
    <property type="entry name" value="INTERMEDIATE FILAMENT"/>
    <property type="match status" value="1"/>
</dbReference>
<dbReference type="PANTHER" id="PTHR23239:SF90">
    <property type="entry name" value="KERATIN, TYPE I CYTOSKELETAL 40"/>
    <property type="match status" value="1"/>
</dbReference>
<dbReference type="Pfam" id="PF00038">
    <property type="entry name" value="Filament"/>
    <property type="match status" value="1"/>
</dbReference>
<dbReference type="PRINTS" id="PR01248">
    <property type="entry name" value="TYPE1KERATIN"/>
</dbReference>
<dbReference type="SMART" id="SM01391">
    <property type="entry name" value="Filament"/>
    <property type="match status" value="1"/>
</dbReference>
<dbReference type="SUPFAM" id="SSF64593">
    <property type="entry name" value="Intermediate filament protein, coiled coil region"/>
    <property type="match status" value="2"/>
</dbReference>
<dbReference type="PROSITE" id="PS00226">
    <property type="entry name" value="IF_ROD_1"/>
    <property type="match status" value="1"/>
</dbReference>
<dbReference type="PROSITE" id="PS51842">
    <property type="entry name" value="IF_ROD_2"/>
    <property type="match status" value="1"/>
</dbReference>
<comment type="function">
    <text evidence="1">May play a role in late hair differentiation.</text>
</comment>
<comment type="subunit">
    <text>Heterotetramer of two type I and two type II keratins.</text>
</comment>
<comment type="miscellaneous">
    <text>There are two types of cytoskeletal and microfibrillar keratin, I (acidic) and II (neutral to basic) (40-55 and 56-70 kDa, respectively).</text>
</comment>
<comment type="similarity">
    <text evidence="2">Belongs to the intermediate filament family.</text>
</comment>
<feature type="chain" id="PRO_0000314858" description="Keratin, type I cytoskeletal 40">
    <location>
        <begin position="1"/>
        <end position="439"/>
    </location>
</feature>
<feature type="domain" description="IF rod" evidence="2">
    <location>
        <begin position="89"/>
        <end position="400"/>
    </location>
</feature>
<feature type="region of interest" description="Head">
    <location>
        <begin position="1"/>
        <end position="89"/>
    </location>
</feature>
<feature type="region of interest" description="Coil 1A">
    <location>
        <begin position="90"/>
        <end position="124"/>
    </location>
</feature>
<feature type="region of interest" description="Linker 1">
    <location>
        <begin position="125"/>
        <end position="135"/>
    </location>
</feature>
<feature type="region of interest" description="Coil 1B">
    <location>
        <begin position="136"/>
        <end position="236"/>
    </location>
</feature>
<feature type="region of interest" description="Linker 12">
    <location>
        <begin position="237"/>
        <end position="252"/>
    </location>
</feature>
<feature type="region of interest" description="Coil 2">
    <location>
        <begin position="253"/>
        <end position="396"/>
    </location>
</feature>
<feature type="region of interest" description="Tail">
    <location>
        <begin position="397"/>
        <end position="439"/>
    </location>
</feature>
<feature type="site" description="Stutter">
    <location>
        <position position="338"/>
    </location>
</feature>
<feature type="sequence conflict" description="In Ref. 2; AAI07360/AAI07361." evidence="3" ref="2">
    <original>N</original>
    <variation>D</variation>
    <location>
        <position position="271"/>
    </location>
</feature>
<protein>
    <recommendedName>
        <fullName>Keratin, type I cytoskeletal 40</fullName>
    </recommendedName>
    <alternativeName>
        <fullName>Cytokeratin-40</fullName>
        <shortName>CK-40</shortName>
    </alternativeName>
    <alternativeName>
        <fullName>Keratin-40</fullName>
        <shortName>K40</shortName>
    </alternativeName>
    <alternativeName>
        <fullName>Type I hair keratin Ka36</fullName>
    </alternativeName>
</protein>